<comment type="function">
    <text evidence="4 5 19 20 21 22">Participates in O-mannosyl glycosylation by catalyzing the addition of N-acetylglucosamine to O-linked mannose on glycoproteins (PubMed:11709191, PubMed:27493216, PubMed:28512129). Catalyzes the synthesis of the GlcNAc(beta1-2)Man(alpha1-)O-Ser/Thr moiety on alpha-dystroglycan and other O-mannosylated proteins, providing the necessary basis for the addition of further carbohydrate moieties (PubMed:11709191, PubMed:27493216). Is specific for alpha linked terminal mannose and does not have MGAT3, MGAT4, MGAT5, MGAT7 or MGAT8 activity.</text>
</comment>
<comment type="catalytic activity">
    <reaction evidence="4 5 7 19 20 21 22">
        <text>3-O-(alpha-D-mannosyl)-L-threonyl-[protein] + UDP-N-acetyl-alpha-D-glucosamine = 3-O-(N-acetyl-beta-D-glucosaminyl-(1-&gt;2)-alpha-D-mannosyl)-L-threonyl-[protein] + UDP + H(+)</text>
        <dbReference type="Rhea" id="RHEA:54128"/>
        <dbReference type="Rhea" id="RHEA-COMP:13547"/>
        <dbReference type="Rhea" id="RHEA-COMP:13802"/>
        <dbReference type="ChEBI" id="CHEBI:15378"/>
        <dbReference type="ChEBI" id="CHEBI:57705"/>
        <dbReference type="ChEBI" id="CHEBI:58223"/>
        <dbReference type="ChEBI" id="CHEBI:137323"/>
        <dbReference type="ChEBI" id="CHEBI:138067"/>
    </reaction>
</comment>
<comment type="cofactor">
    <cofactor evidence="21 28">
        <name>Mn(2+)</name>
        <dbReference type="ChEBI" id="CHEBI:29035"/>
    </cofactor>
    <text evidence="21">The manganese ion interacts primarily with the substrate UDP-N-acetylglucosamine.</text>
</comment>
<comment type="biophysicochemical properties">
    <kinetics>
        <KM evidence="4 5">1.85 mM for mannosylpeptide</KM>
        <KM evidence="4 5">0.73 mM for UDP-GlcNAc</KM>
        <KM evidence="4 5">30 mM for Man(alpha1-)O-benzyl</KM>
        <KM evidence="4 5">12 mM for CYA[Man(alpha1-)O-T]AV</KM>
    </kinetics>
    <phDependence>
        <text evidence="4 5">Optimum pH is 6.0.</text>
    </phDependence>
</comment>
<comment type="pathway">
    <text evidence="4 5 19 20 21">Protein modification; protein glycosylation.</text>
</comment>
<comment type="subunit">
    <text evidence="15 21">Interacts with DAG1 (via O-linked mannose moiety) (PubMed:27493216). Interacts (via transmembrane domain) with FKTN; the interaction is direct and is required for normal location in Golgi membranes (PubMed:17034757).</text>
</comment>
<comment type="interaction">
    <interactant intactId="EBI-3912424">
        <id>Q8WZA1</id>
    </interactant>
    <interactant intactId="EBI-12222807">
        <id>P04233-2</id>
        <label>CD74</label>
    </interactant>
    <organismsDiffer>false</organismsDiffer>
    <experiments>3</experiments>
</comment>
<comment type="interaction">
    <interactant intactId="EBI-3912424">
        <id>Q8WZA1</id>
    </interactant>
    <interactant intactId="EBI-1045797">
        <id>Q8N5K1</id>
        <label>CISD2</label>
    </interactant>
    <organismsDiffer>false</organismsDiffer>
    <experiments>3</experiments>
</comment>
<comment type="interaction">
    <interactant intactId="EBI-3912424">
        <id>Q8WZA1</id>
    </interactant>
    <interactant intactId="EBI-12823659">
        <id>Q5JRM2</id>
        <label>CXorf66</label>
    </interactant>
    <organismsDiffer>false</organismsDiffer>
    <experiments>3</experiments>
</comment>
<comment type="interaction">
    <interactant intactId="EBI-3912424">
        <id>Q8WZA1</id>
    </interactant>
    <interactant intactId="EBI-781551">
        <id>Q9Y282</id>
        <label>ERGIC3</label>
    </interactant>
    <organismsDiffer>false</organismsDiffer>
    <experiments>3</experiments>
</comment>
<comment type="interaction">
    <interactant intactId="EBI-3912424">
        <id>Q8WZA1</id>
    </interactant>
    <interactant intactId="EBI-21511782">
        <id>O75072</id>
        <label>FKTN</label>
    </interactant>
    <organismsDiffer>false</organismsDiffer>
    <experiments>7</experiments>
</comment>
<comment type="interaction">
    <interactant intactId="EBI-3912424">
        <id>Q8WZA1</id>
    </interactant>
    <interactant intactId="EBI-739832">
        <id>Q8TBB1</id>
        <label>LNX1</label>
    </interactant>
    <organismsDiffer>false</organismsDiffer>
    <experiments>4</experiments>
</comment>
<comment type="interaction">
    <interactant intactId="EBI-3912424">
        <id>Q8WZA1</id>
    </interactant>
    <interactant intactId="EBI-11337900">
        <id>Q9H5K3</id>
        <label>POMK</label>
    </interactant>
    <organismsDiffer>false</organismsDiffer>
    <experiments>2</experiments>
</comment>
<comment type="interaction">
    <interactant intactId="EBI-3912424">
        <id>Q8WZA1</id>
    </interactant>
    <interactant intactId="EBI-3914763">
        <id>Q9Y2B1</id>
        <label>RXYLT1</label>
    </interactant>
    <organismsDiffer>false</organismsDiffer>
    <experiments>5</experiments>
</comment>
<comment type="interaction">
    <interactant intactId="EBI-3912424">
        <id>Q8WZA1</id>
    </interactant>
    <interactant intactId="EBI-10982110">
        <id>Q96Q45-2</id>
        <label>TMEM237</label>
    </interactant>
    <organismsDiffer>false</organismsDiffer>
    <experiments>3</experiments>
</comment>
<comment type="subcellular location">
    <subcellularLocation>
        <location evidence="15 24">Golgi apparatus membrane</location>
        <topology evidence="27">Single-pass type II membrane protein</topology>
    </subcellularLocation>
</comment>
<comment type="alternative products">
    <event type="alternative splicing"/>
    <isoform>
        <id>Q8WZA1-1</id>
        <name>1</name>
        <sequence type="displayed"/>
    </isoform>
    <isoform>
        <id>Q8WZA1-2</id>
        <name>2</name>
        <sequence type="described" ref="VSP_054029"/>
    </isoform>
</comment>
<comment type="tissue specificity">
    <text evidence="4 5">Constitutively expressed. An additional weaker band is also detected in spinal cord, lymph node, and trachea. Expressed especially in astrocytes. Also expressed in immature and mature neurons.</text>
</comment>
<comment type="domain">
    <text evidence="10">Amino acid residues between 299-311 are important for both protein expression and enzymatic activity. The minimal catalytic domain is located between positions 299-651. Single amino acid substitutions in the stem domain from MEB patients abolished the activity of the membrane-bound form but not the soluble form. This suggests that the stem domain of the soluble form is unnecessary for activity, but that some amino acids play a crucial role in the membrane-bound form.</text>
</comment>
<comment type="domain">
    <text evidence="21">The GG-type lectin domain is known as the stem domain in POMGnT1. It mediates specific interaction with beta-linked N-acetylglucosamine moieties of O-glycosylated proteins. It also interacts with its product, N-acetyl-beta-D-glucosaminyl-(1-&gt;2)-O-alpha-D-mannosylprotein.</text>
</comment>
<comment type="disease" evidence="4 6 7 10 11 12 14 17">
    <disease id="DI-00792">
        <name>Muscular dystrophy-dystroglycanopathy congenital with brain and eye anomalies A3</name>
        <acronym>MDDGA3</acronym>
        <description>An autosomal recessive disorder characterized by congenital muscular dystrophy, ocular abnormalities, cobblestone lissencephaly, and cerebellar and pontine hypoplasia. Patients present severe congenital myopia, congenital glaucoma, pallor of the optic disks, retinal hypoplasia, intellectual disability, hydrocephalus, abnormal electroencephalograms, generalized muscle weakness and myoclonic jerks. Included diseases are the more severe Walker-Warburg syndrome and the slightly less severe muscle-eye-brain disease.</description>
        <dbReference type="MIM" id="253280"/>
    </disease>
    <text>The disease is caused by variants affecting the gene represented in this entry.</text>
</comment>
<comment type="disease" evidence="14 17 18">
    <disease id="DI-02961">
        <name>Muscular dystrophy-dystroglycanopathy congenital with impaired intellectual development B3</name>
        <acronym>MDDGB3</acronym>
        <description>An autosomal recessive disorder characterized by congenital muscular dystrophy associated with intellectual disability and mild structural brain abnormalities. Clinical features include intellectual disability, white matter changes, cerebellar cysts, pontine hypoplasia, myopia, optic atrophy, decreased alpha-dystroglycan on muscle biopsy and increased serum creatine kinase.</description>
        <dbReference type="MIM" id="613151"/>
    </disease>
    <text>The disease is caused by variants affecting the gene represented in this entry.</text>
</comment>
<comment type="disease" evidence="16">
    <disease id="DI-02957">
        <name>Muscular dystrophy-dystroglycanopathy limb-girdle C3</name>
        <acronym>MDDGC3</acronym>
        <description>A rare form of limb-girdle muscular dystrophy with normal cognition. Muscle biopsy shows dystrophic changes with variable staining for glycosylated alpha-dystroglycan.</description>
        <dbReference type="MIM" id="613157"/>
    </disease>
    <text>The disease is caused by variants affecting the gene represented in this entry.</text>
</comment>
<comment type="disease" evidence="19 20">
    <disease id="DI-04824">
        <name>Retinitis pigmentosa 76</name>
        <acronym>RP76</acronym>
        <description>A form of retinitis pigmentosa, a retinal dystrophy belonging to the group of pigmentary retinopathies. Retinitis pigmentosa is characterized by retinal pigment deposits visible on fundus examination and primary loss of rod photoreceptor cells followed by secondary loss of cone photoreceptors. Patients typically have night vision blindness and loss of midperipheral visual field. As their condition progresses, they lose their far peripheral visual field and eventually central vision as well. RP76 inheritance is autosomal recessive.</description>
        <dbReference type="MIM" id="617123"/>
    </disease>
    <text>The disease is caused by variants affecting the gene represented in this entry.</text>
</comment>
<comment type="similarity">
    <text evidence="26">Belongs to the glycosyltransferase 13 family.</text>
</comment>
<comment type="sequence caution" evidence="26">
    <conflict type="erroneous initiation">
        <sequence resource="EMBL-CDS" id="BAB14207"/>
    </conflict>
    <text>Truncated N-terminus.</text>
</comment>
<comment type="online information" name="Functional Glycomics Gateway - GTase">
    <link uri="http://www.functionalglycomics.org/glycomics/molecule/jsp/glycoEnzyme/viewGlycoEnzyme.jsp?gbpId=gt_hum_559"/>
    <text>Protein O-linked-mannose beta-1,2-N-acetylglucosaminyltransferase 1</text>
</comment>
<sequence length="660" mass="75252">MDDWKPSPLIKPFGARKKRSWYLTWKYKLTNQRALRRFCQTGAVLFLLVTVIVNIKLILDTRRAISEANEDPEPEQDYDEALGRLEPPRRRGSGPRRVLDVEVYSSRSKVYVAVDGTTVLEDEAREQGRGIHVIVLNQATGHVMAKRVFDTYSPHEDEAMVLFLNMVAPGRVLICTVKDEGSFHLKDTAKALLRSLGSQAGPALGWRDTWAFVGRKGGPVFGEKHSKSPALSSWGDPVLLKTDVPLSSAEEAECHWADTELNRRRRRFCSKVEGYGSVCSCKDPTPIEFSPDPLPDNKVLNVPVAVIAGNRPNYLYRMLRSLLSAQGVSPQMITVFIDGYYEEPMDVVALFGLRGIQHTPISIKNARVSQHYKASLTATFNLFPEAKFAVVLEEDLDIAVDFFSFLSQSIHLLEEDDSLYCISAWNDQGYEHTAEDPALLYRVETMPGLGWVLRRSLYKEELEPKWPTPEKLWDWDMWMRMPEQRRGRECIIPDVSRSYHFGIVGLNMNGYFHEAYFKKHKFNTVPGVQLRNVDSLKKEAYEVEVHRLLSEAEVLDHSKNPCEDSFLPDTEGHTYVAFIRMEKDDDFTTWTQLAKCLHIWDLDVRGNHRGLWRLFRKKNHFLMVGVPASPYSVKKPPSVTPIFLEPPPKEEGAPGAPEQT</sequence>
<evidence type="ECO:0000255" key="1"/>
<evidence type="ECO:0000255" key="2">
    <source>
        <dbReference type="PROSITE-ProRule" id="PRU01375"/>
    </source>
</evidence>
<evidence type="ECO:0000256" key="3">
    <source>
        <dbReference type="SAM" id="MobiDB-lite"/>
    </source>
</evidence>
<evidence type="ECO:0000269" key="4">
    <source>
    </source>
</evidence>
<evidence type="ECO:0000269" key="5">
    <source>
    </source>
</evidence>
<evidence type="ECO:0000269" key="6">
    <source>
    </source>
</evidence>
<evidence type="ECO:0000269" key="7">
    <source>
    </source>
</evidence>
<evidence type="ECO:0000269" key="8">
    <source>
    </source>
</evidence>
<evidence type="ECO:0000269" key="9">
    <source>
    </source>
</evidence>
<evidence type="ECO:0000269" key="10">
    <source>
    </source>
</evidence>
<evidence type="ECO:0000269" key="11">
    <source>
    </source>
</evidence>
<evidence type="ECO:0000269" key="12">
    <source>
    </source>
</evidence>
<evidence type="ECO:0000269" key="13">
    <source>
    </source>
</evidence>
<evidence type="ECO:0000269" key="14">
    <source>
    </source>
</evidence>
<evidence type="ECO:0000269" key="15">
    <source>
    </source>
</evidence>
<evidence type="ECO:0000269" key="16">
    <source>
    </source>
</evidence>
<evidence type="ECO:0000269" key="17">
    <source>
    </source>
</evidence>
<evidence type="ECO:0000269" key="18">
    <source>
    </source>
</evidence>
<evidence type="ECO:0000269" key="19">
    <source>
    </source>
</evidence>
<evidence type="ECO:0000269" key="20">
    <source>
    </source>
</evidence>
<evidence type="ECO:0000269" key="21">
    <source>
    </source>
</evidence>
<evidence type="ECO:0000269" key="22">
    <source>
    </source>
</evidence>
<evidence type="ECO:0000269" key="23">
    <source ref="6"/>
</evidence>
<evidence type="ECO:0000303" key="24">
    <source>
    </source>
</evidence>
<evidence type="ECO:0000303" key="25">
    <source>
    </source>
</evidence>
<evidence type="ECO:0000305" key="26"/>
<evidence type="ECO:0000305" key="27">
    <source>
    </source>
</evidence>
<evidence type="ECO:0000305" key="28">
    <source>
    </source>
</evidence>
<evidence type="ECO:0000305" key="29">
    <source>
    </source>
</evidence>
<evidence type="ECO:0007744" key="30">
    <source>
        <dbReference type="PDB" id="5GGF"/>
    </source>
</evidence>
<evidence type="ECO:0007744" key="31">
    <source>
        <dbReference type="PDB" id="5GGG"/>
    </source>
</evidence>
<evidence type="ECO:0007744" key="32">
    <source>
        <dbReference type="PDB" id="5GGI"/>
    </source>
</evidence>
<evidence type="ECO:0007744" key="33">
    <source>
        <dbReference type="PDB" id="5GGJ"/>
    </source>
</evidence>
<evidence type="ECO:0007744" key="34">
    <source>
        <dbReference type="PDB" id="5GGK"/>
    </source>
</evidence>
<evidence type="ECO:0007744" key="35">
    <source>
        <dbReference type="PDB" id="5GGL"/>
    </source>
</evidence>
<evidence type="ECO:0007744" key="36">
    <source>
        <dbReference type="PDB" id="5GGN"/>
    </source>
</evidence>
<evidence type="ECO:0007744" key="37">
    <source>
        <dbReference type="PDB" id="5GGO"/>
    </source>
</evidence>
<evidence type="ECO:0007744" key="38">
    <source>
        <dbReference type="PDB" id="5GGP"/>
    </source>
</evidence>
<evidence type="ECO:0007744" key="39">
    <source>
    </source>
</evidence>
<evidence type="ECO:0007829" key="40">
    <source>
        <dbReference type="PDB" id="5GGF"/>
    </source>
</evidence>
<evidence type="ECO:0007829" key="41">
    <source>
        <dbReference type="PDB" id="5GGG"/>
    </source>
</evidence>
<evidence type="ECO:0007829" key="42">
    <source>
        <dbReference type="PDB" id="5GGI"/>
    </source>
</evidence>
<evidence type="ECO:0007829" key="43">
    <source>
        <dbReference type="PDB" id="5GGN"/>
    </source>
</evidence>
<evidence type="ECO:0007829" key="44">
    <source>
        <dbReference type="PDB" id="5GGP"/>
    </source>
</evidence>
<reference key="1">
    <citation type="journal article" date="2001" name="Dev. Cell">
        <title>Muscular dystrophy and neuronal migration disorder caused by mutations in a glycosyltransferase, POMGnT1.</title>
        <authorList>
            <person name="Yoshida A."/>
            <person name="Kobayashi K."/>
            <person name="Manya H."/>
            <person name="Taniguchi K."/>
            <person name="Kano H."/>
            <person name="Mizuno M."/>
            <person name="Inazu T."/>
            <person name="Mitsuhashi H."/>
            <person name="Takahashi S."/>
            <person name="Takeuchi M."/>
            <person name="Herrmann R."/>
            <person name="Straub V."/>
            <person name="Talim B."/>
            <person name="Voit T."/>
            <person name="Topaloglu H."/>
            <person name="Toda T."/>
            <person name="Endo T."/>
        </authorList>
    </citation>
    <scope>NUCLEOTIDE SEQUENCE [MRNA] (ISOFORM 1)</scope>
    <scope>FUNCTION</scope>
    <scope>CATALYTIC ACTIVITY</scope>
    <scope>PATHWAY</scope>
    <scope>SUBCELLULAR LOCATION</scope>
    <scope>TOPOLOGY</scope>
    <scope>BIOPHYSICOCHEMICAL PROPERTIES</scope>
    <scope>TISSUE SPECIFICITY</scope>
    <scope>VARIANTS MDDGA3 ARG-493 AND ASN-550</scope>
    <scope>VARIANT VAL-623</scope>
    <scope>MUTAGENESIS OF 1-MET--ILE-65</scope>
    <source>
        <tissue>Brain</tissue>
    </source>
</reference>
<reference key="2">
    <citation type="journal article" date="2003" name="Hum. Mol. Genet.">
        <title>Worldwide distribution and broader clinical spectrum of muscle-eye-brain disease.</title>
        <authorList>
            <person name="Taniguchi K."/>
            <person name="Kobayashi K."/>
            <person name="Saito K."/>
            <person name="Yamanouchi H."/>
            <person name="Ohnuma A."/>
            <person name="Hayashi Y.K."/>
            <person name="Manya H."/>
            <person name="Jin D.K."/>
            <person name="Lee M."/>
            <person name="Parano E."/>
            <person name="Falsaperla R."/>
            <person name="Pavone P."/>
            <person name="Coster R.V."/>
            <person name="Talim B."/>
            <person name="Steinbrecher A."/>
            <person name="Straub V."/>
            <person name="Nishino I."/>
            <person name="Topaloglu H."/>
            <person name="Voit T."/>
            <person name="Endo T."/>
            <person name="Toda T."/>
        </authorList>
    </citation>
    <scope>NUCLEOTIDE SEQUENCE [MRNA] (ISOFORM 1)</scope>
    <scope>VARIANTS MDDGA3 LYS-223 AND TYR-269</scope>
    <scope>VARIANT VAL-623</scope>
    <source>
        <tissue>Brain</tissue>
    </source>
</reference>
<reference key="3">
    <citation type="journal article" date="2003" name="Genome Res.">
        <title>The secreted protein discovery initiative (SPDI), a large-scale effort to identify novel human secreted and transmembrane proteins: a bioinformatics assessment.</title>
        <authorList>
            <person name="Clark H.F."/>
            <person name="Gurney A.L."/>
            <person name="Abaya E."/>
            <person name="Baker K."/>
            <person name="Baldwin D.T."/>
            <person name="Brush J."/>
            <person name="Chen J."/>
            <person name="Chow B."/>
            <person name="Chui C."/>
            <person name="Crowley C."/>
            <person name="Currell B."/>
            <person name="Deuel B."/>
            <person name="Dowd P."/>
            <person name="Eaton D."/>
            <person name="Foster J.S."/>
            <person name="Grimaldi C."/>
            <person name="Gu Q."/>
            <person name="Hass P.E."/>
            <person name="Heldens S."/>
            <person name="Huang A."/>
            <person name="Kim H.S."/>
            <person name="Klimowski L."/>
            <person name="Jin Y."/>
            <person name="Johnson S."/>
            <person name="Lee J."/>
            <person name="Lewis L."/>
            <person name="Liao D."/>
            <person name="Mark M.R."/>
            <person name="Robbie E."/>
            <person name="Sanchez C."/>
            <person name="Schoenfeld J."/>
            <person name="Seshagiri S."/>
            <person name="Simmons L."/>
            <person name="Singh J."/>
            <person name="Smith V."/>
            <person name="Stinson J."/>
            <person name="Vagts A."/>
            <person name="Vandlen R.L."/>
            <person name="Watanabe C."/>
            <person name="Wieand D."/>
            <person name="Woods K."/>
            <person name="Xie M.-H."/>
            <person name="Yansura D.G."/>
            <person name="Yi S."/>
            <person name="Yu G."/>
            <person name="Yuan J."/>
            <person name="Zhang M."/>
            <person name="Zhang Z."/>
            <person name="Goddard A.D."/>
            <person name="Wood W.I."/>
            <person name="Godowski P.J."/>
            <person name="Gray A.M."/>
        </authorList>
    </citation>
    <scope>NUCLEOTIDE SEQUENCE [LARGE SCALE MRNA] (ISOFORM 1)</scope>
    <scope>VARIANT VAL-623</scope>
</reference>
<reference key="4">
    <citation type="journal article" date="2004" name="Nat. Genet.">
        <title>Complete sequencing and characterization of 21,243 full-length human cDNAs.</title>
        <authorList>
            <person name="Ota T."/>
            <person name="Suzuki Y."/>
            <person name="Nishikawa T."/>
            <person name="Otsuki T."/>
            <person name="Sugiyama T."/>
            <person name="Irie R."/>
            <person name="Wakamatsu A."/>
            <person name="Hayashi K."/>
            <person name="Sato H."/>
            <person name="Nagai K."/>
            <person name="Kimura K."/>
            <person name="Makita H."/>
            <person name="Sekine M."/>
            <person name="Obayashi M."/>
            <person name="Nishi T."/>
            <person name="Shibahara T."/>
            <person name="Tanaka T."/>
            <person name="Ishii S."/>
            <person name="Yamamoto J."/>
            <person name="Saito K."/>
            <person name="Kawai Y."/>
            <person name="Isono Y."/>
            <person name="Nakamura Y."/>
            <person name="Nagahari K."/>
            <person name="Murakami K."/>
            <person name="Yasuda T."/>
            <person name="Iwayanagi T."/>
            <person name="Wagatsuma M."/>
            <person name="Shiratori A."/>
            <person name="Sudo H."/>
            <person name="Hosoiri T."/>
            <person name="Kaku Y."/>
            <person name="Kodaira H."/>
            <person name="Kondo H."/>
            <person name="Sugawara M."/>
            <person name="Takahashi M."/>
            <person name="Kanda K."/>
            <person name="Yokoi T."/>
            <person name="Furuya T."/>
            <person name="Kikkawa E."/>
            <person name="Omura Y."/>
            <person name="Abe K."/>
            <person name="Kamihara K."/>
            <person name="Katsuta N."/>
            <person name="Sato K."/>
            <person name="Tanikawa M."/>
            <person name="Yamazaki M."/>
            <person name="Ninomiya K."/>
            <person name="Ishibashi T."/>
            <person name="Yamashita H."/>
            <person name="Murakawa K."/>
            <person name="Fujimori K."/>
            <person name="Tanai H."/>
            <person name="Kimata M."/>
            <person name="Watanabe M."/>
            <person name="Hiraoka S."/>
            <person name="Chiba Y."/>
            <person name="Ishida S."/>
            <person name="Ono Y."/>
            <person name="Takiguchi S."/>
            <person name="Watanabe S."/>
            <person name="Yosida M."/>
            <person name="Hotuta T."/>
            <person name="Kusano J."/>
            <person name="Kanehori K."/>
            <person name="Takahashi-Fujii A."/>
            <person name="Hara H."/>
            <person name="Tanase T.-O."/>
            <person name="Nomura Y."/>
            <person name="Togiya S."/>
            <person name="Komai F."/>
            <person name="Hara R."/>
            <person name="Takeuchi K."/>
            <person name="Arita M."/>
            <person name="Imose N."/>
            <person name="Musashino K."/>
            <person name="Yuuki H."/>
            <person name="Oshima A."/>
            <person name="Sasaki N."/>
            <person name="Aotsuka S."/>
            <person name="Yoshikawa Y."/>
            <person name="Matsunawa H."/>
            <person name="Ichihara T."/>
            <person name="Shiohata N."/>
            <person name="Sano S."/>
            <person name="Moriya S."/>
            <person name="Momiyama H."/>
            <person name="Satoh N."/>
            <person name="Takami S."/>
            <person name="Terashima Y."/>
            <person name="Suzuki O."/>
            <person name="Nakagawa S."/>
            <person name="Senoh A."/>
            <person name="Mizoguchi H."/>
            <person name="Goto Y."/>
            <person name="Shimizu F."/>
            <person name="Wakebe H."/>
            <person name="Hishigaki H."/>
            <person name="Watanabe T."/>
            <person name="Sugiyama A."/>
            <person name="Takemoto M."/>
            <person name="Kawakami B."/>
            <person name="Yamazaki M."/>
            <person name="Watanabe K."/>
            <person name="Kumagai A."/>
            <person name="Itakura S."/>
            <person name="Fukuzumi Y."/>
            <person name="Fujimori Y."/>
            <person name="Komiyama M."/>
            <person name="Tashiro H."/>
            <person name="Tanigami A."/>
            <person name="Fujiwara T."/>
            <person name="Ono T."/>
            <person name="Yamada K."/>
            <person name="Fujii Y."/>
            <person name="Ozaki K."/>
            <person name="Hirao M."/>
            <person name="Ohmori Y."/>
            <person name="Kawabata A."/>
            <person name="Hikiji T."/>
            <person name="Kobatake N."/>
            <person name="Inagaki H."/>
            <person name="Ikema Y."/>
            <person name="Okamoto S."/>
            <person name="Okitani R."/>
            <person name="Kawakami T."/>
            <person name="Noguchi S."/>
            <person name="Itoh T."/>
            <person name="Shigeta K."/>
            <person name="Senba T."/>
            <person name="Matsumura K."/>
            <person name="Nakajima Y."/>
            <person name="Mizuno T."/>
            <person name="Morinaga M."/>
            <person name="Sasaki M."/>
            <person name="Togashi T."/>
            <person name="Oyama M."/>
            <person name="Hata H."/>
            <person name="Watanabe M."/>
            <person name="Komatsu T."/>
            <person name="Mizushima-Sugano J."/>
            <person name="Satoh T."/>
            <person name="Shirai Y."/>
            <person name="Takahashi Y."/>
            <person name="Nakagawa K."/>
            <person name="Okumura K."/>
            <person name="Nagase T."/>
            <person name="Nomura N."/>
            <person name="Kikuchi H."/>
            <person name="Masuho Y."/>
            <person name="Yamashita R."/>
            <person name="Nakai K."/>
            <person name="Yada T."/>
            <person name="Nakamura Y."/>
            <person name="Ohara O."/>
            <person name="Isogai T."/>
            <person name="Sugano S."/>
        </authorList>
    </citation>
    <scope>NUCLEOTIDE SEQUENCE [LARGE SCALE MRNA] (ISOFORMS 1 AND 2)</scope>
    <scope>VARIANT VAL-623</scope>
</reference>
<reference key="5">
    <citation type="journal article" date="2006" name="Nature">
        <title>The DNA sequence and biological annotation of human chromosome 1.</title>
        <authorList>
            <person name="Gregory S.G."/>
            <person name="Barlow K.F."/>
            <person name="McLay K.E."/>
            <person name="Kaul R."/>
            <person name="Swarbreck D."/>
            <person name="Dunham A."/>
            <person name="Scott C.E."/>
            <person name="Howe K.L."/>
            <person name="Woodfine K."/>
            <person name="Spencer C.C.A."/>
            <person name="Jones M.C."/>
            <person name="Gillson C."/>
            <person name="Searle S."/>
            <person name="Zhou Y."/>
            <person name="Kokocinski F."/>
            <person name="McDonald L."/>
            <person name="Evans R."/>
            <person name="Phillips K."/>
            <person name="Atkinson A."/>
            <person name="Cooper R."/>
            <person name="Jones C."/>
            <person name="Hall R.E."/>
            <person name="Andrews T.D."/>
            <person name="Lloyd C."/>
            <person name="Ainscough R."/>
            <person name="Almeida J.P."/>
            <person name="Ambrose K.D."/>
            <person name="Anderson F."/>
            <person name="Andrew R.W."/>
            <person name="Ashwell R.I.S."/>
            <person name="Aubin K."/>
            <person name="Babbage A.K."/>
            <person name="Bagguley C.L."/>
            <person name="Bailey J."/>
            <person name="Beasley H."/>
            <person name="Bethel G."/>
            <person name="Bird C.P."/>
            <person name="Bray-Allen S."/>
            <person name="Brown J.Y."/>
            <person name="Brown A.J."/>
            <person name="Buckley D."/>
            <person name="Burton J."/>
            <person name="Bye J."/>
            <person name="Carder C."/>
            <person name="Chapman J.C."/>
            <person name="Clark S.Y."/>
            <person name="Clarke G."/>
            <person name="Clee C."/>
            <person name="Cobley V."/>
            <person name="Collier R.E."/>
            <person name="Corby N."/>
            <person name="Coville G.J."/>
            <person name="Davies J."/>
            <person name="Deadman R."/>
            <person name="Dunn M."/>
            <person name="Earthrowl M."/>
            <person name="Ellington A.G."/>
            <person name="Errington H."/>
            <person name="Frankish A."/>
            <person name="Frankland J."/>
            <person name="French L."/>
            <person name="Garner P."/>
            <person name="Garnett J."/>
            <person name="Gay L."/>
            <person name="Ghori M.R.J."/>
            <person name="Gibson R."/>
            <person name="Gilby L.M."/>
            <person name="Gillett W."/>
            <person name="Glithero R.J."/>
            <person name="Grafham D.V."/>
            <person name="Griffiths C."/>
            <person name="Griffiths-Jones S."/>
            <person name="Grocock R."/>
            <person name="Hammond S."/>
            <person name="Harrison E.S.I."/>
            <person name="Hart E."/>
            <person name="Haugen E."/>
            <person name="Heath P.D."/>
            <person name="Holmes S."/>
            <person name="Holt K."/>
            <person name="Howden P.J."/>
            <person name="Hunt A.R."/>
            <person name="Hunt S.E."/>
            <person name="Hunter G."/>
            <person name="Isherwood J."/>
            <person name="James R."/>
            <person name="Johnson C."/>
            <person name="Johnson D."/>
            <person name="Joy A."/>
            <person name="Kay M."/>
            <person name="Kershaw J.K."/>
            <person name="Kibukawa M."/>
            <person name="Kimberley A.M."/>
            <person name="King A."/>
            <person name="Knights A.J."/>
            <person name="Lad H."/>
            <person name="Laird G."/>
            <person name="Lawlor S."/>
            <person name="Leongamornlert D.A."/>
            <person name="Lloyd D.M."/>
            <person name="Loveland J."/>
            <person name="Lovell J."/>
            <person name="Lush M.J."/>
            <person name="Lyne R."/>
            <person name="Martin S."/>
            <person name="Mashreghi-Mohammadi M."/>
            <person name="Matthews L."/>
            <person name="Matthews N.S.W."/>
            <person name="McLaren S."/>
            <person name="Milne S."/>
            <person name="Mistry S."/>
            <person name="Moore M.J.F."/>
            <person name="Nickerson T."/>
            <person name="O'Dell C.N."/>
            <person name="Oliver K."/>
            <person name="Palmeiri A."/>
            <person name="Palmer S.A."/>
            <person name="Parker A."/>
            <person name="Patel D."/>
            <person name="Pearce A.V."/>
            <person name="Peck A.I."/>
            <person name="Pelan S."/>
            <person name="Phelps K."/>
            <person name="Phillimore B.J."/>
            <person name="Plumb R."/>
            <person name="Rajan J."/>
            <person name="Raymond C."/>
            <person name="Rouse G."/>
            <person name="Saenphimmachak C."/>
            <person name="Sehra H.K."/>
            <person name="Sheridan E."/>
            <person name="Shownkeen R."/>
            <person name="Sims S."/>
            <person name="Skuce C.D."/>
            <person name="Smith M."/>
            <person name="Steward C."/>
            <person name="Subramanian S."/>
            <person name="Sycamore N."/>
            <person name="Tracey A."/>
            <person name="Tromans A."/>
            <person name="Van Helmond Z."/>
            <person name="Wall M."/>
            <person name="Wallis J.M."/>
            <person name="White S."/>
            <person name="Whitehead S.L."/>
            <person name="Wilkinson J.E."/>
            <person name="Willey D.L."/>
            <person name="Williams H."/>
            <person name="Wilming L."/>
            <person name="Wray P.W."/>
            <person name="Wu Z."/>
            <person name="Coulson A."/>
            <person name="Vaudin M."/>
            <person name="Sulston J.E."/>
            <person name="Durbin R.M."/>
            <person name="Hubbard T."/>
            <person name="Wooster R."/>
            <person name="Dunham I."/>
            <person name="Carter N.P."/>
            <person name="McVean G."/>
            <person name="Ross M.T."/>
            <person name="Harrow J."/>
            <person name="Olson M.V."/>
            <person name="Beck S."/>
            <person name="Rogers J."/>
            <person name="Bentley D.R."/>
        </authorList>
    </citation>
    <scope>NUCLEOTIDE SEQUENCE [LARGE SCALE GENOMIC DNA]</scope>
</reference>
<reference key="6">
    <citation type="submission" date="2005-09" db="EMBL/GenBank/DDBJ databases">
        <authorList>
            <person name="Mural R.J."/>
            <person name="Istrail S."/>
            <person name="Sutton G.G."/>
            <person name="Florea L."/>
            <person name="Halpern A.L."/>
            <person name="Mobarry C.M."/>
            <person name="Lippert R."/>
            <person name="Walenz B."/>
            <person name="Shatkay H."/>
            <person name="Dew I."/>
            <person name="Miller J.R."/>
            <person name="Flanigan M.J."/>
            <person name="Edwards N.J."/>
            <person name="Bolanos R."/>
            <person name="Fasulo D."/>
            <person name="Halldorsson B.V."/>
            <person name="Hannenhalli S."/>
            <person name="Turner R."/>
            <person name="Yooseph S."/>
            <person name="Lu F."/>
            <person name="Nusskern D.R."/>
            <person name="Shue B.C."/>
            <person name="Zheng X.H."/>
            <person name="Zhong F."/>
            <person name="Delcher A.L."/>
            <person name="Huson D.H."/>
            <person name="Kravitz S.A."/>
            <person name="Mouchard L."/>
            <person name="Reinert K."/>
            <person name="Remington K.A."/>
            <person name="Clark A.G."/>
            <person name="Waterman M.S."/>
            <person name="Eichler E.E."/>
            <person name="Adams M.D."/>
            <person name="Hunkapiller M.W."/>
            <person name="Myers E.W."/>
            <person name="Venter J.C."/>
        </authorList>
    </citation>
    <scope>NUCLEOTIDE SEQUENCE [LARGE SCALE GENOMIC DNA]</scope>
    <scope>VARIANT VAL-623</scope>
</reference>
<reference key="7">
    <citation type="journal article" date="2004" name="Genome Res.">
        <title>The status, quality, and expansion of the NIH full-length cDNA project: the Mammalian Gene Collection (MGC).</title>
        <authorList>
            <consortium name="The MGC Project Team"/>
        </authorList>
    </citation>
    <scope>NUCLEOTIDE SEQUENCE [LARGE SCALE MRNA] (ISOFORM 1)</scope>
    <scope>VARIANTS VAL-250 AND VAL-623</scope>
    <source>
        <tissue>Placenta</tissue>
    </source>
</reference>
<reference key="8">
    <citation type="journal article" date="2002" name="Biochem. J.">
        <title>Cloning and expression of a novel UDP-GlcNAc:alpha-D-mannoside beta-1,2-N-acetylglucosaminyltransferase homologous to UDP-GlcNAc:alpha-3-D-mannoside beta-1,2-N-acetylglucosaminyltransferase I.</title>
        <authorList>
            <person name="Zhang W."/>
            <person name="Betel D."/>
            <person name="Schachter H."/>
        </authorList>
    </citation>
    <scope>NUCLEOTIDE SEQUENCE [MRNA] OF 84-660 (ISOFORM 1)</scope>
    <scope>FUNCTION</scope>
    <scope>CATALYTIC ACTIVITY</scope>
    <scope>BIOPHYSICOCHEMICAL PROPERTIES</scope>
    <scope>PATHWAY</scope>
    <scope>TISSUE SPECIFICITY</scope>
    <scope>VARIANT VAL-623</scope>
    <source>
        <tissue>Brain</tissue>
    </source>
</reference>
<reference key="9">
    <citation type="journal article" date="2006" name="Biochem. Biophys. Res. Commun.">
        <title>Molecular interaction between fukutin and POMGnT1 in the glycosylation pathway of alpha-dystroglycan.</title>
        <authorList>
            <person name="Xiong H."/>
            <person name="Kobayashi K."/>
            <person name="Tachikawa M."/>
            <person name="Manya H."/>
            <person name="Takeda S."/>
            <person name="Chiyonobu T."/>
            <person name="Fujikake N."/>
            <person name="Wang F."/>
            <person name="Nishimoto A."/>
            <person name="Morris G.E."/>
            <person name="Nagai Y."/>
            <person name="Kanagawa M."/>
            <person name="Endo T."/>
            <person name="Toda T."/>
        </authorList>
    </citation>
    <scope>SUBCELLULAR LOCATION</scope>
    <scope>INTERACTION WITH FKTN</scope>
</reference>
<reference key="10">
    <citation type="journal article" date="2013" name="J. Proteome Res.">
        <title>Toward a comprehensive characterization of a human cancer cell phosphoproteome.</title>
        <authorList>
            <person name="Zhou H."/>
            <person name="Di Palma S."/>
            <person name="Preisinger C."/>
            <person name="Peng M."/>
            <person name="Polat A.N."/>
            <person name="Heck A.J."/>
            <person name="Mohammed S."/>
        </authorList>
    </citation>
    <scope>PHOSPHORYLATION [LARGE SCALE ANALYSIS] AT SER-7</scope>
    <scope>IDENTIFICATION BY MASS SPECTROMETRY [LARGE SCALE ANALYSIS]</scope>
    <source>
        <tissue>Erythroleukemia</tissue>
    </source>
</reference>
<reference key="11">
    <citation type="journal article" date="2014" name="J. Proteomics">
        <title>An enzyme assisted RP-RPLC approach for in-depth analysis of human liver phosphoproteome.</title>
        <authorList>
            <person name="Bian Y."/>
            <person name="Song C."/>
            <person name="Cheng K."/>
            <person name="Dong M."/>
            <person name="Wang F."/>
            <person name="Huang J."/>
            <person name="Sun D."/>
            <person name="Wang L."/>
            <person name="Ye M."/>
            <person name="Zou H."/>
        </authorList>
    </citation>
    <scope>IDENTIFICATION BY MASS SPECTROMETRY [LARGE SCALE ANALYSIS]</scope>
    <source>
        <tissue>Liver</tissue>
    </source>
</reference>
<reference key="12">
    <citation type="journal article" date="2017" name="J. Biol. Chem.">
        <title>Mammalian O-mannosylation of cadherins and plexins is independent of protein O-mannosyltransferases 1 and 2.</title>
        <authorList>
            <person name="Larsen I.S.B."/>
            <person name="Narimatsu Y."/>
            <person name="Joshi H.J."/>
            <person name="Yang Z."/>
            <person name="Harrison O.J."/>
            <person name="Brasch J."/>
            <person name="Shapiro L."/>
            <person name="Honig B."/>
            <person name="Vakhrushev S.Y."/>
            <person name="Clausen H."/>
            <person name="Halim A."/>
        </authorList>
    </citation>
    <scope>FUNCTION</scope>
    <scope>CATALYTIC ACTIVITY</scope>
</reference>
<reference key="13">
    <citation type="journal article" date="2003" name="Biochem. Biophys. Res. Commun.">
        <title>Loss-of-function of an N-acetylglucosaminyltransferase, POMGnT1, in muscle-eye-brain disease.</title>
        <authorList>
            <person name="Manya H."/>
            <person name="Sakai K."/>
            <person name="Kobayashi K."/>
            <person name="Taniguchi K."/>
            <person name="Kawakita M."/>
            <person name="Toda T."/>
            <person name="Endo T."/>
        </authorList>
    </citation>
    <scope>CHARACTERIZATION OF VARIANTS MDDGA3 LYS-223; TYR-269 AND ARG-493</scope>
    <scope>CATALYTIC ACTIVITY</scope>
    <scope>COFACTOR</scope>
</reference>
<reference key="14">
    <citation type="journal article" date="2004" name="Biochem. Biophys. Res. Commun.">
        <title>Structure-function analysis of human protein O-linked mannose beta1,2-N-acetylglucosaminyltransferase 1, POMGnT1.</title>
        <authorList>
            <person name="Akasaka-Manya K."/>
            <person name="Manya H."/>
            <person name="Kobayashi K."/>
            <person name="Toda T."/>
            <person name="Endo T."/>
        </authorList>
    </citation>
    <scope>IDENTIFICATION OF CATALYTIC DOMAIN</scope>
    <scope>CHARACTERIZATION OF VARIANTS MDDGA3 LYS-223 AND TYR-269</scope>
</reference>
<reference evidence="30 31 32 33 34 35 36 37 38" key="15">
    <citation type="journal article" date="2016" name="Proc. Natl. Acad. Sci. U.S.A.">
        <title>Carbohydrate-binding domain of the POMGnT1 stem region modulates O-mannosylation sites of alpha-dystroglycan.</title>
        <authorList>
            <person name="Kuwabara N."/>
            <person name="Manya H."/>
            <person name="Yamada T."/>
            <person name="Tateno H."/>
            <person name="Kanagawa M."/>
            <person name="Kobayashi K."/>
            <person name="Akasaka-Manya K."/>
            <person name="Hirose Y."/>
            <person name="Mizuno M."/>
            <person name="Ikeguchi M."/>
            <person name="Toda T."/>
            <person name="Hirabayashi J."/>
            <person name="Senda T."/>
            <person name="Endo T."/>
            <person name="Kato R."/>
        </authorList>
    </citation>
    <scope>X-RAY CRYSTALLOGRAPHY (1.21 ANGSTROMS) OF 92-250 IN COMPLEXES WITH CARBOHYDRATE; DAG1 PEPTIDE; MANGANESE; MANNOSE AND UDP</scope>
    <scope>DISULFIDE BONDS</scope>
    <scope>FUNCTION</scope>
    <scope>CATALYTIC ACTIVITY</scope>
    <scope>COFACTOR</scope>
    <scope>PATHWAY</scope>
    <scope>DOMAIN</scope>
    <scope>MUTAGENESIS OF ARG-129; ASP-179; ARG-207; ASP-474; MET-481; ASN-507 AND TRP-600</scope>
</reference>
<reference key="16">
    <citation type="journal article" date="2004" name="Ann. Neurol.">
        <title>POMGnT1 gene alterations in a family with neurological abnormalities.</title>
        <authorList>
            <person name="Vervoort V.S."/>
            <person name="Holden K.R."/>
            <person name="Ukadike K.C."/>
            <person name="Collins J.S."/>
            <person name="Saul R.A."/>
            <person name="Srivastava A.K."/>
        </authorList>
    </citation>
    <scope>VARIANTS MDDGA3 HIS-265; GLN-311 AND CYS-442</scope>
</reference>
<reference key="17">
    <citation type="journal article" date="2004" name="J. Med. Genet.">
        <title>POMGnT1 mutation and phenotypic spectrum in muscle-eye-brain disease.</title>
        <authorList>
            <person name="Diesen C."/>
            <person name="Saarinen A."/>
            <person name="Pihko H."/>
            <person name="Rosenlew C."/>
            <person name="Cormand B."/>
            <person name="Dobyns W.B."/>
            <person name="Dieguez J."/>
            <person name="Valanne L."/>
            <person name="Joensuu T."/>
            <person name="Lehesjoki A.-E."/>
        </authorList>
    </citation>
    <scope>VARIANTS MDDGA3 SER-425 AND TYR-490</scope>
</reference>
<reference key="18">
    <citation type="journal article" date="2006" name="Arch. Neurol.">
        <title>POMGnT1 mutations in congenital muscular dystrophy: genotype-phenotype correlation and expanded clinical spectrum.</title>
        <authorList>
            <person name="Biancheri R."/>
            <person name="Bertini E."/>
            <person name="Falace A."/>
            <person name="Pedemonte M."/>
            <person name="Rossi A."/>
            <person name="D'Amico A."/>
            <person name="Scapolan S."/>
            <person name="Bergamino L."/>
            <person name="Petrini S."/>
            <person name="Cassandrini D."/>
            <person name="Broda P."/>
            <person name="Manfredi M."/>
            <person name="Zara F."/>
            <person name="Santorelli F.M."/>
            <person name="Minetti C."/>
            <person name="Bruno C."/>
        </authorList>
    </citation>
    <scope>VARIANTS MDDGA3 ARG-198 AND TYR-490</scope>
    <scope>VARIANT MDDGB3 GLN-311</scope>
</reference>
<reference key="19">
    <citation type="journal article" date="2008" name="Ann. Neurol.">
        <title>Brain involvement in muscular dystrophies with defective dystroglycan glycosylation.</title>
        <authorList>
            <person name="Clement E."/>
            <person name="Mercuri E."/>
            <person name="Godfrey C."/>
            <person name="Smith J."/>
            <person name="Robb S."/>
            <person name="Kinali M."/>
            <person name="Straub V."/>
            <person name="Bushby K."/>
            <person name="Manzur A."/>
            <person name="Talim B."/>
            <person name="Cowan F."/>
            <person name="Quinlivan R."/>
            <person name="Klein A."/>
            <person name="Longman C."/>
            <person name="McWilliam R."/>
            <person name="Topaloglu H."/>
            <person name="Mein R."/>
            <person name="Abbs S."/>
            <person name="North K."/>
            <person name="Barkovich A.J."/>
            <person name="Rutherford M."/>
            <person name="Muntoni F."/>
        </authorList>
    </citation>
    <scope>VARIANTS MDDGA3 PRO-176; HIS-367 AND HIS-427</scope>
    <scope>VARIANT MDDGB3 TYR-490</scope>
</reference>
<reference key="20">
    <citation type="journal article" date="2008" name="Arch. Neurol.">
        <title>Mild POMGnT1 mutations underlie a novel limb-girdle muscular dystrophy variant.</title>
        <authorList>
            <person name="Clement E.M."/>
            <person name="Godfrey C."/>
            <person name="Tan J."/>
            <person name="Brockington M."/>
            <person name="Torelli S."/>
            <person name="Feng L."/>
            <person name="Brown S.C."/>
            <person name="Jimenez-Mallebrera C."/>
            <person name="Sewry C.A."/>
            <person name="Longman C."/>
            <person name="Mein R."/>
            <person name="Abbs S."/>
            <person name="Vajsar J."/>
            <person name="Schachter H."/>
            <person name="Muntoni F."/>
        </authorList>
    </citation>
    <scope>VARIANT MDDGC3 ASN-556</scope>
    <scope>CHARACTERIZATION OF VARIANT MDDGC3 ASN-556</scope>
</reference>
<reference key="21">
    <citation type="journal article" date="2009" name="Neurology">
        <title>Congenital muscular dystrophies with defective glycosylation of dystroglycan: a population study.</title>
        <authorList>
            <person name="Mercuri E."/>
            <person name="Messina S."/>
            <person name="Bruno C."/>
            <person name="Mora M."/>
            <person name="Pegoraro E."/>
            <person name="Comi G.P."/>
            <person name="D'Amico A."/>
            <person name="Aiello C."/>
            <person name="Biancheri R."/>
            <person name="Berardinelli A."/>
            <person name="Boffi P."/>
            <person name="Cassandrini D."/>
            <person name="Laverda A."/>
            <person name="Moggio M."/>
            <person name="Morandi L."/>
            <person name="Moroni I."/>
            <person name="Pane M."/>
            <person name="Pezzani R."/>
            <person name="Pichiecchio A."/>
            <person name="Pini A."/>
            <person name="Minetti C."/>
            <person name="Mongini T."/>
            <person name="Mottarelli E."/>
            <person name="Ricci E."/>
            <person name="Ruggieri A."/>
            <person name="Saredi S."/>
            <person name="Scuderi C."/>
            <person name="Tessa A."/>
            <person name="Toscano A."/>
            <person name="Tortorella G."/>
            <person name="Trevisan C.P."/>
            <person name="Uggetti C."/>
            <person name="Vasco G."/>
            <person name="Santorelli F.M."/>
            <person name="Bertini E."/>
        </authorList>
    </citation>
    <scope>VARIANT MDDGB3 PRO-605</scope>
</reference>
<reference key="22">
    <citation type="journal article" date="2016" name="Hum. Mol. Genet.">
        <title>Mutations in POMGNT1 cause non-syndromic retinitis pigmentosa.</title>
        <authorList>
            <person name="Xu M."/>
            <person name="Yamada T."/>
            <person name="Sun Z."/>
            <person name="Eblimit A."/>
            <person name="Lopez I."/>
            <person name="Wang F."/>
            <person name="Manya H."/>
            <person name="Xu S."/>
            <person name="Zhao L."/>
            <person name="Li Y."/>
            <person name="Kimchi A."/>
            <person name="Sharon D."/>
            <person name="Sui R."/>
            <person name="Endo T."/>
            <person name="Koenekoop R.K."/>
            <person name="Chen R."/>
        </authorList>
    </citation>
    <scope>INVOLVEMENT IN RP76</scope>
    <scope>VARIANTS RP76 LYS-156; SER-287 AND ALA-502</scope>
    <scope>CHARACTERIZATION OF VARIANTS RP76 LYS-156 AND SER-287</scope>
    <scope>FUNCTION</scope>
    <scope>CATALYTIC ACTIVITY</scope>
    <scope>PATHWAY</scope>
</reference>
<reference key="23">
    <citation type="journal article" date="2016" name="Invest. Ophthalmol. Vis. Sci.">
        <title>Homozygosity Mapping and Whole-Genome Sequencing Links a Missense Mutation in POMGNT1 to Autosomal Recessive Retinitis Pigmentosa.</title>
        <authorList>
            <person name="Wang N.H."/>
            <person name="Chen S.J."/>
            <person name="Yang C.F."/>
            <person name="Chen H.W."/>
            <person name="Chuang H.P."/>
            <person name="Lu Y.H."/>
            <person name="Chen C.H."/>
            <person name="Wu J.Y."/>
            <person name="Niu D.M."/>
            <person name="Chen Y.T."/>
        </authorList>
    </citation>
    <scope>INVOLVEMENT IN RP76</scope>
    <scope>VARIANT RP76 ARG-120</scope>
    <scope>CHARACTERIZATION OF VARIANT RP76 ARG-120</scope>
    <scope>FUNCTION</scope>
    <scope>CATALYTIC ACTIVITY</scope>
    <scope>PATHWAY</scope>
</reference>
<gene>
    <name type="primary">POMGNT1</name>
    <name type="synonym">MGAT1.2</name>
    <name type="ORF">UNQ746/PRO1475</name>
</gene>
<organism>
    <name type="scientific">Homo sapiens</name>
    <name type="common">Human</name>
    <dbReference type="NCBI Taxonomy" id="9606"/>
    <lineage>
        <taxon>Eukaryota</taxon>
        <taxon>Metazoa</taxon>
        <taxon>Chordata</taxon>
        <taxon>Craniata</taxon>
        <taxon>Vertebrata</taxon>
        <taxon>Euteleostomi</taxon>
        <taxon>Mammalia</taxon>
        <taxon>Eutheria</taxon>
        <taxon>Euarchontoglires</taxon>
        <taxon>Primates</taxon>
        <taxon>Haplorrhini</taxon>
        <taxon>Catarrhini</taxon>
        <taxon>Hominidae</taxon>
        <taxon>Homo</taxon>
    </lineage>
</organism>
<accession>Q8WZA1</accession>
<accession>D3DQ16</accession>
<accession>Q5VST2</accession>
<accession>Q5VST3</accession>
<accession>Q9BV55</accession>
<accession>Q9H9L8</accession>
<accession>Q9NXF9</accession>
<accession>Q9NYF7</accession>
<protein>
    <recommendedName>
        <fullName>Protein O-linked-mannose beta-1,2-N-acetylglucosaminyltransferase 1</fullName>
        <shortName>POMGnT1</shortName>
        <ecNumber evidence="4 5 19 20 21 22">2.4.1.-</ecNumber>
    </recommendedName>
    <alternativeName>
        <fullName>UDP-GlcNAc:alpha-D-mannoside beta-1,2-N-acetylglucosaminyltransferase I.2</fullName>
        <shortName>GnT I.2</shortName>
    </alternativeName>
</protein>
<keyword id="KW-0002">3D-structure</keyword>
<keyword id="KW-0025">Alternative splicing</keyword>
<keyword id="KW-0912">Congenital muscular dystrophy</keyword>
<keyword id="KW-0225">Disease variant</keyword>
<keyword id="KW-1015">Disulfide bond</keyword>
<keyword id="KW-1215">Dystroglycanopathy</keyword>
<keyword id="KW-0328">Glycosyltransferase</keyword>
<keyword id="KW-0333">Golgi apparatus</keyword>
<keyword id="KW-0430">Lectin</keyword>
<keyword id="KW-0947">Limb-girdle muscular dystrophy</keyword>
<keyword id="KW-0451">Lissencephaly</keyword>
<keyword id="KW-0464">Manganese</keyword>
<keyword id="KW-0472">Membrane</keyword>
<keyword id="KW-0479">Metal-binding</keyword>
<keyword id="KW-0597">Phosphoprotein</keyword>
<keyword id="KW-1267">Proteomics identification</keyword>
<keyword id="KW-1185">Reference proteome</keyword>
<keyword id="KW-0682">Retinitis pigmentosa</keyword>
<keyword id="KW-0735">Signal-anchor</keyword>
<keyword id="KW-0808">Transferase</keyword>
<keyword id="KW-0812">Transmembrane</keyword>
<keyword id="KW-1133">Transmembrane helix</keyword>
<name>PMGT1_HUMAN</name>
<proteinExistence type="evidence at protein level"/>
<feature type="chain" id="PRO_0000191390" description="Protein O-linked-mannose beta-1,2-N-acetylglucosaminyltransferase 1">
    <location>
        <begin position="1"/>
        <end position="660"/>
    </location>
</feature>
<feature type="topological domain" description="Cytoplasmic" evidence="1">
    <location>
        <begin position="1"/>
        <end position="37"/>
    </location>
</feature>
<feature type="transmembrane region" description="Helical; Signal-anchor for type II membrane protein" evidence="1">
    <location>
        <begin position="38"/>
        <end position="58"/>
    </location>
</feature>
<feature type="topological domain" description="Lumenal" evidence="27">
    <location>
        <begin position="59"/>
        <end position="660"/>
    </location>
</feature>
<feature type="domain" description="GG-type lectin" evidence="2">
    <location>
        <begin position="97"/>
        <end position="258"/>
    </location>
</feature>
<feature type="region of interest" description="Disordered" evidence="3">
    <location>
        <begin position="68"/>
        <end position="96"/>
    </location>
</feature>
<feature type="region of interest" description="Catalytic" evidence="10 21">
    <location>
        <begin position="300"/>
        <end position="646"/>
    </location>
</feature>
<feature type="region of interest" description="Interaction with O-glycosylated substrate glycoprotein" evidence="21">
    <location>
        <begin position="473"/>
        <end position="481"/>
    </location>
</feature>
<feature type="region of interest" description="Interaction with O-glycosylated substrate glycoprotein" evidence="21">
    <location>
        <begin position="506"/>
        <end position="512"/>
    </location>
</feature>
<feature type="region of interest" description="Interaction with O-glycosylated substrate glycoprotein" evidence="21">
    <location>
        <begin position="600"/>
        <end position="605"/>
    </location>
</feature>
<feature type="region of interest" description="Disordered" evidence="3">
    <location>
        <begin position="637"/>
        <end position="660"/>
    </location>
</feature>
<feature type="compositionally biased region" description="Acidic residues" evidence="3">
    <location>
        <begin position="68"/>
        <end position="80"/>
    </location>
</feature>
<feature type="binding site" evidence="21">
    <location>
        <position position="129"/>
    </location>
    <ligand>
        <name>a carbohydrate</name>
        <dbReference type="ChEBI" id="CHEBI:16646"/>
    </ligand>
</feature>
<feature type="binding site" evidence="21">
    <location>
        <position position="179"/>
    </location>
    <ligand>
        <name>a carbohydrate</name>
        <dbReference type="ChEBI" id="CHEBI:16646"/>
    </ligand>
</feature>
<feature type="binding site" evidence="21">
    <location>
        <position position="207"/>
    </location>
    <ligand>
        <name>a carbohydrate</name>
        <dbReference type="ChEBI" id="CHEBI:16646"/>
    </ligand>
</feature>
<feature type="binding site" evidence="29 32">
    <location>
        <begin position="307"/>
        <end position="311"/>
    </location>
    <ligand>
        <name>UDP-N-acetyl-alpha-D-glucosamine</name>
        <dbReference type="ChEBI" id="CHEBI:57705"/>
    </ligand>
</feature>
<feature type="binding site" evidence="29 32">
    <location>
        <position position="338"/>
    </location>
    <ligand>
        <name>UDP-N-acetyl-alpha-D-glucosamine</name>
        <dbReference type="ChEBI" id="CHEBI:57705"/>
    </ligand>
</feature>
<feature type="binding site" evidence="29 32">
    <location>
        <position position="371"/>
    </location>
    <ligand>
        <name>UDP-N-acetyl-alpha-D-glucosamine</name>
        <dbReference type="ChEBI" id="CHEBI:57705"/>
    </ligand>
</feature>
<feature type="binding site" evidence="29 32">
    <location>
        <begin position="394"/>
        <end position="395"/>
    </location>
    <ligand>
        <name>UDP-N-acetyl-alpha-D-glucosamine</name>
        <dbReference type="ChEBI" id="CHEBI:57705"/>
    </ligand>
</feature>
<feature type="binding site" evidence="21 32">
    <location>
        <position position="395"/>
    </location>
    <ligand>
        <name>Mn(2+)</name>
        <dbReference type="ChEBI" id="CHEBI:29035"/>
    </ligand>
</feature>
<feature type="binding site" evidence="21 32">
    <location>
        <position position="500"/>
    </location>
    <ligand>
        <name>Mn(2+)</name>
        <dbReference type="ChEBI" id="CHEBI:29035"/>
    </ligand>
</feature>
<feature type="binding site" evidence="29 32">
    <location>
        <begin position="506"/>
        <end position="507"/>
    </location>
    <ligand>
        <name>UDP-N-acetyl-alpha-D-glucosamine</name>
        <dbReference type="ChEBI" id="CHEBI:57705"/>
    </ligand>
</feature>
<feature type="modified residue" description="Phosphoserine" evidence="39">
    <location>
        <position position="7"/>
    </location>
</feature>
<feature type="disulfide bond" evidence="21 30 31 32">
    <location>
        <begin position="254"/>
        <end position="281"/>
    </location>
</feature>
<feature type="disulfide bond" evidence="21 30 31 32">
    <location>
        <begin position="269"/>
        <end position="279"/>
    </location>
</feature>
<feature type="disulfide bond" evidence="21 30 31 32">
    <location>
        <begin position="421"/>
        <end position="490"/>
    </location>
</feature>
<feature type="disulfide bond" evidence="21 30 31 32">
    <location>
        <begin position="562"/>
        <end position="596"/>
    </location>
</feature>
<feature type="splice variant" id="VSP_054029" description="In isoform 2." evidence="25">
    <original>VGVPASPYSVKKPPSVTPIFLEPPPKEEGAPGAPEQT</original>
    <variation>SEEATLSHPNFPGATPKGGGSPRSPRTDMRPPPGPCGAGPGSESNLFIDCPEGLENRPNLEGLDFFLGWNAALRVGLALTQETAVPNPWTGPAGAHMLTQTHSETLRHWTRPPLSLLFVQISKAG</variation>
    <location>
        <begin position="624"/>
        <end position="660"/>
    </location>
</feature>
<feature type="sequence variant" id="VAR_077054" description="In RP76; no effect on protein abundance; reduced acetylglucosaminyltransferase activity; dbSNP:rs886037949." evidence="20">
    <original>L</original>
    <variation>R</variation>
    <location>
        <position position="120"/>
    </location>
</feature>
<feature type="sequence variant" id="VAR_076524" description="In RP76; reduced acetylglucosaminyltransferase activity; dbSNP:rs886037947." evidence="19">
    <original>E</original>
    <variation>K</variation>
    <location>
        <position position="156"/>
    </location>
</feature>
<feature type="sequence variant" id="VAR_065021" description="In MDDGA3; dbSNP:rs386834030." evidence="17">
    <original>T</original>
    <variation>P</variation>
    <location>
        <position position="176"/>
    </location>
</feature>
<feature type="sequence variant" id="VAR_065022" description="In MDDGA3; dbSNP:rs386834032." evidence="14">
    <original>S</original>
    <variation>R</variation>
    <location>
        <position position="198"/>
    </location>
</feature>
<feature type="sequence variant" id="VAR_023101" description="In MDDGA3; specific activity abolished in the membrane bound form but not the soluble form; dbSNP:rs386834036." evidence="6 7 10">
    <original>E</original>
    <variation>K</variation>
    <location>
        <position position="223"/>
    </location>
</feature>
<feature type="sequence variant" id="VAR_030645" description="In dbSNP:rs17855359." evidence="13">
    <original>E</original>
    <variation>V</variation>
    <location>
        <position position="250"/>
    </location>
</feature>
<feature type="sequence variant" id="VAR_023102" description="In MDDGA3; uncertain significance; dbSNP:rs386834010." evidence="11">
    <original>R</original>
    <variation>H</variation>
    <location>
        <position position="265"/>
    </location>
</feature>
<feature type="sequence variant" id="VAR_023103" description="In MDDGA3; specific activity abolished of the membrane bound form but not the soluble form; dbSNP:rs386834037." evidence="6 7 10">
    <original>C</original>
    <variation>Y</variation>
    <location>
        <position position="269"/>
    </location>
</feature>
<feature type="sequence variant" id="VAR_076525" description="In RP76; reduced acetylglucosaminyltransferase activity; dbSNP:rs200863680." evidence="19">
    <original>I</original>
    <variation>S</variation>
    <location>
        <position position="287"/>
    </location>
</feature>
<feature type="sequence variant" id="VAR_023104" description="In MDDGA3 and MDDGB3; dbSNP:rs193919336." evidence="11 14">
    <original>R</original>
    <variation>Q</variation>
    <location>
        <position position="311"/>
    </location>
</feature>
<feature type="sequence variant" id="VAR_065023" description="In MDDGA3; dbSNP:rs762972459." evidence="17">
    <original>R</original>
    <variation>H</variation>
    <location>
        <position position="367"/>
    </location>
</feature>
<feature type="sequence variant" id="VAR_023105" description="In MDDGA3; dbSNP:rs386834011." evidence="12">
    <original>W</original>
    <variation>S</variation>
    <location>
        <position position="425"/>
    </location>
</feature>
<feature type="sequence variant" id="VAR_065024" description="In MDDGA3." evidence="17">
    <original>D</original>
    <variation>H</variation>
    <location>
        <position position="427"/>
    </location>
</feature>
<feature type="sequence variant" id="VAR_023106" description="In MDDGA3; dbSNP:rs28940869." evidence="11">
    <original>R</original>
    <variation>C</variation>
    <location>
        <position position="442"/>
    </location>
</feature>
<feature type="sequence variant" id="VAR_023107" description="In MDDGA3 and MDDGB3; dbSNP:rs267606960." evidence="12 14 17">
    <original>C</original>
    <variation>Y</variation>
    <location>
        <position position="490"/>
    </location>
</feature>
<feature type="sequence variant" id="VAR_023108" description="In MDDGA3; specific activity abolished; dbSNP:rs28942068." evidence="4 7">
    <original>P</original>
    <variation>R</variation>
    <location>
        <position position="493"/>
    </location>
</feature>
<feature type="sequence variant" id="VAR_076526" description="In RP76; dbSNP:rs886037948." evidence="19">
    <original>G</original>
    <variation>A</variation>
    <location>
        <position position="502"/>
    </location>
</feature>
<feature type="sequence variant" id="VAR_030646" description="In dbSNP:rs17102066.">
    <original>V</original>
    <variation>I</variation>
    <location>
        <position position="504"/>
    </location>
</feature>
<feature type="sequence variant" id="VAR_023109" description="In MDDGA3; dbSNP:rs193919335." evidence="4">
    <original>S</original>
    <variation>N</variation>
    <location>
        <position position="550"/>
    </location>
</feature>
<feature type="sequence variant" id="VAR_065025" description="In MDDGC3; normal enzyme activity but altered kinetic properties; dbSNP:rs74374973." evidence="16">
    <original>D</original>
    <variation>N</variation>
    <location>
        <position position="556"/>
    </location>
</feature>
<feature type="sequence variant" id="VAR_065026" description="In MDDGB3; dbSNP:rs267606962." evidence="18">
    <original>R</original>
    <variation>P</variation>
    <location>
        <position position="605"/>
    </location>
</feature>
<feature type="sequence variant" id="VAR_023110" description="In dbSNP:rs6659553." evidence="4 5 6 8 9 13 23">
    <original>M</original>
    <variation>V</variation>
    <location>
        <position position="623"/>
    </location>
</feature>
<feature type="mutagenesis site" description="Gives rise to a soluble form." evidence="4">
    <location>
        <begin position="1"/>
        <end position="65"/>
    </location>
</feature>
<feature type="mutagenesis site" description="Decreased protein stability. Decreased enzyme activity." evidence="21">
    <original>R</original>
    <variation>A</variation>
    <location>
        <position position="129"/>
    </location>
</feature>
<feature type="mutagenesis site" description="Moderately increased enzyme activity. Decreased affinity for N-acetylglucosamine." evidence="21">
    <original>D</original>
    <variation>A</variation>
    <location>
        <position position="179"/>
    </location>
</feature>
<feature type="mutagenesis site" description="Decreased enzyme activity. Impairs protein stability." evidence="21">
    <original>R</original>
    <variation>A</variation>
    <location>
        <position position="207"/>
    </location>
</feature>
<feature type="mutagenesis site" description="Abolishes in vitro enzyme activity; when associated with A-477." evidence="21">
    <original>W</original>
    <variation>A</variation>
    <location>
        <position position="473"/>
    </location>
</feature>
<feature type="mutagenesis site" description="Nearly abolishes enzyme activity." evidence="21">
    <original>D</original>
    <variation>A</variation>
    <location>
        <position position="474"/>
    </location>
</feature>
<feature type="mutagenesis site" description="Abolishes in vitro enzyme activity; when associated with A-473." evidence="21">
    <original>M</original>
    <variation>A</variation>
    <location>
        <position position="477"/>
    </location>
</feature>
<feature type="mutagenesis site" description="Decreased enzyme activity." evidence="21">
    <original>M</original>
    <variation>A</variation>
    <location>
        <position position="481"/>
    </location>
</feature>
<feature type="mutagenesis site" description="Abolishes enzyme activity." evidence="21">
    <original>N</original>
    <variation>A</variation>
    <location>
        <position position="507"/>
    </location>
</feature>
<feature type="mutagenesis site" description="Abolishes enzyme activity." evidence="21">
    <original>W</original>
    <variation>A</variation>
    <location>
        <position position="600"/>
    </location>
</feature>
<feature type="sequence conflict" description="In Ref. 3; BAA91053." evidence="26" ref="3">
    <original>P</original>
    <variation>L</variation>
    <location>
        <position position="636"/>
    </location>
</feature>
<feature type="strand" evidence="43">
    <location>
        <begin position="98"/>
        <end position="108"/>
    </location>
</feature>
<feature type="strand" evidence="43">
    <location>
        <begin position="110"/>
        <end position="114"/>
    </location>
</feature>
<feature type="strand" evidence="43">
    <location>
        <begin position="117"/>
        <end position="122"/>
    </location>
</feature>
<feature type="strand" evidence="44">
    <location>
        <begin position="125"/>
        <end position="127"/>
    </location>
</feature>
<feature type="strand" evidence="43">
    <location>
        <begin position="130"/>
        <end position="136"/>
    </location>
</feature>
<feature type="turn" evidence="43">
    <location>
        <begin position="138"/>
        <end position="140"/>
    </location>
</feature>
<feature type="strand" evidence="43">
    <location>
        <begin position="143"/>
        <end position="149"/>
    </location>
</feature>
<feature type="helix" evidence="43">
    <location>
        <begin position="156"/>
        <end position="166"/>
    </location>
</feature>
<feature type="strand" evidence="43">
    <location>
        <begin position="171"/>
        <end position="179"/>
    </location>
</feature>
<feature type="helix" evidence="43">
    <location>
        <begin position="187"/>
        <end position="195"/>
    </location>
</feature>
<feature type="helix" evidence="43">
    <location>
        <begin position="201"/>
        <end position="203"/>
    </location>
</feature>
<feature type="strand" evidence="43">
    <location>
        <begin position="209"/>
        <end position="215"/>
    </location>
</feature>
<feature type="strand" evidence="43">
    <location>
        <begin position="220"/>
        <end position="226"/>
    </location>
</feature>
<feature type="strand" evidence="41">
    <location>
        <begin position="229"/>
        <end position="233"/>
    </location>
</feature>
<feature type="strand" evidence="43">
    <location>
        <begin position="238"/>
        <end position="245"/>
    </location>
</feature>
<feature type="helix" evidence="40">
    <location>
        <begin position="249"/>
        <end position="252"/>
    </location>
</feature>
<feature type="helix" evidence="40">
    <location>
        <begin position="261"/>
        <end position="269"/>
    </location>
</feature>
<feature type="helix" evidence="40">
    <location>
        <begin position="276"/>
        <end position="279"/>
    </location>
</feature>
<feature type="strand" evidence="40">
    <location>
        <begin position="281"/>
        <end position="283"/>
    </location>
</feature>
<feature type="turn" evidence="40">
    <location>
        <begin position="298"/>
        <end position="301"/>
    </location>
</feature>
<feature type="strand" evidence="40">
    <location>
        <begin position="304"/>
        <end position="308"/>
    </location>
</feature>
<feature type="helix" evidence="40">
    <location>
        <begin position="312"/>
        <end position="323"/>
    </location>
</feature>
<feature type="helix" evidence="40">
    <location>
        <begin position="330"/>
        <end position="332"/>
    </location>
</feature>
<feature type="strand" evidence="40">
    <location>
        <begin position="333"/>
        <end position="339"/>
    </location>
</feature>
<feature type="helix" evidence="40">
    <location>
        <begin position="342"/>
        <end position="350"/>
    </location>
</feature>
<feature type="strand" evidence="40">
    <location>
        <begin position="354"/>
        <end position="358"/>
    </location>
</feature>
<feature type="helix" evidence="40">
    <location>
        <begin position="364"/>
        <end position="382"/>
    </location>
</feature>
<feature type="strand" evidence="40">
    <location>
        <begin position="387"/>
        <end position="393"/>
    </location>
</feature>
<feature type="strand" evidence="40">
    <location>
        <begin position="396"/>
        <end position="398"/>
    </location>
</feature>
<feature type="helix" evidence="40">
    <location>
        <begin position="402"/>
        <end position="415"/>
    </location>
</feature>
<feature type="strand" evidence="40">
    <location>
        <begin position="419"/>
        <end position="424"/>
    </location>
</feature>
<feature type="turn" evidence="40">
    <location>
        <begin position="431"/>
        <end position="433"/>
    </location>
</feature>
<feature type="strand" evidence="40">
    <location>
        <begin position="440"/>
        <end position="445"/>
    </location>
</feature>
<feature type="strand" evidence="40">
    <location>
        <begin position="449"/>
        <end position="454"/>
    </location>
</feature>
<feature type="helix" evidence="40">
    <location>
        <begin position="455"/>
        <end position="460"/>
    </location>
</feature>
<feature type="helix" evidence="40">
    <location>
        <begin position="463"/>
        <end position="465"/>
    </location>
</feature>
<feature type="helix" evidence="40">
    <location>
        <begin position="475"/>
        <end position="480"/>
    </location>
</feature>
<feature type="helix" evidence="40">
    <location>
        <begin position="482"/>
        <end position="485"/>
    </location>
</feature>
<feature type="strand" evidence="40">
    <location>
        <begin position="489"/>
        <end position="500"/>
    </location>
</feature>
<feature type="strand" evidence="42">
    <location>
        <begin position="504"/>
        <end position="507"/>
    </location>
</feature>
<feature type="helix" evidence="42">
    <location>
        <begin position="510"/>
        <end position="516"/>
    </location>
</feature>
<feature type="turn" evidence="42">
    <location>
        <begin position="517"/>
        <end position="519"/>
    </location>
</feature>
<feature type="helix" evidence="40">
    <location>
        <begin position="533"/>
        <end position="536"/>
    </location>
</feature>
<feature type="helix" evidence="40">
    <location>
        <begin position="538"/>
        <end position="551"/>
    </location>
</feature>
<feature type="strand" evidence="41">
    <location>
        <begin position="552"/>
        <end position="554"/>
    </location>
</feature>
<feature type="helix" evidence="40">
    <location>
        <begin position="564"/>
        <end position="566"/>
    </location>
</feature>
<feature type="strand" evidence="40">
    <location>
        <begin position="574"/>
        <end position="583"/>
    </location>
</feature>
<feature type="helix" evidence="40">
    <location>
        <begin position="588"/>
        <end position="596"/>
    </location>
</feature>
<feature type="strand" evidence="40">
    <location>
        <begin position="606"/>
        <end position="608"/>
    </location>
</feature>
<feature type="strand" evidence="40">
    <location>
        <begin position="611"/>
        <end position="616"/>
    </location>
</feature>
<feature type="strand" evidence="40">
    <location>
        <begin position="619"/>
        <end position="627"/>
    </location>
</feature>
<feature type="helix" evidence="40">
    <location>
        <begin position="630"/>
        <end position="634"/>
    </location>
</feature>
<feature type="sequence conflict" description="In Ref. 4; AK056186." evidence="26" ref="4">
    <original>G</original>
    <variation>K</variation>
    <location sequence="Q8WZA1-2">
        <position position="636"/>
    </location>
</feature>
<dbReference type="EC" id="2.4.1.-" evidence="4 5 19 20 21 22"/>
<dbReference type="EMBL" id="AB057356">
    <property type="protein sequence ID" value="BAB71960.1"/>
    <property type="molecule type" value="mRNA"/>
</dbReference>
<dbReference type="EMBL" id="AY358592">
    <property type="protein sequence ID" value="AAQ88955.1"/>
    <property type="molecule type" value="mRNA"/>
</dbReference>
<dbReference type="EMBL" id="AK000284">
    <property type="protein sequence ID" value="BAA91053.1"/>
    <property type="molecule type" value="mRNA"/>
</dbReference>
<dbReference type="EMBL" id="AK022727">
    <property type="protein sequence ID" value="BAB14207.1"/>
    <property type="status" value="ALT_INIT"/>
    <property type="molecule type" value="mRNA"/>
</dbReference>
<dbReference type="EMBL" id="AK056186">
    <property type="status" value="NOT_ANNOTATED_CDS"/>
    <property type="molecule type" value="mRNA"/>
</dbReference>
<dbReference type="EMBL" id="AL672043">
    <property type="status" value="NOT_ANNOTATED_CDS"/>
    <property type="molecule type" value="Genomic_DNA"/>
</dbReference>
<dbReference type="EMBL" id="CH471059">
    <property type="protein sequence ID" value="EAX06932.1"/>
    <property type="molecule type" value="Genomic_DNA"/>
</dbReference>
<dbReference type="EMBL" id="CH471059">
    <property type="protein sequence ID" value="EAX06933.1"/>
    <property type="molecule type" value="Genomic_DNA"/>
</dbReference>
<dbReference type="EMBL" id="CH471059">
    <property type="protein sequence ID" value="EAX06935.1"/>
    <property type="molecule type" value="Genomic_DNA"/>
</dbReference>
<dbReference type="EMBL" id="BC001471">
    <property type="protein sequence ID" value="AAH01471.1"/>
    <property type="molecule type" value="mRNA"/>
</dbReference>
<dbReference type="EMBL" id="AF250859">
    <property type="protein sequence ID" value="AAF71270.2"/>
    <property type="molecule type" value="mRNA"/>
</dbReference>
<dbReference type="CCDS" id="CCDS531.1">
    <molecule id="Q8WZA1-1"/>
</dbReference>
<dbReference type="CCDS" id="CCDS57995.1">
    <molecule id="Q8WZA1-2"/>
</dbReference>
<dbReference type="RefSeq" id="NP_001230695.2">
    <molecule id="Q8WZA1-2"/>
    <property type="nucleotide sequence ID" value="NM_001243766.2"/>
</dbReference>
<dbReference type="RefSeq" id="NP_060209.4">
    <molecule id="Q8WZA1-1"/>
    <property type="nucleotide sequence ID" value="NM_017739.4"/>
</dbReference>
<dbReference type="RefSeq" id="XP_006710819.1">
    <molecule id="Q8WZA1-2"/>
    <property type="nucleotide sequence ID" value="XM_006710756.2"/>
</dbReference>
<dbReference type="RefSeq" id="XP_016857179.1">
    <molecule id="Q8WZA1-1"/>
    <property type="nucleotide sequence ID" value="XM_017001690.2"/>
</dbReference>
<dbReference type="RefSeq" id="XP_047280467.1">
    <molecule id="Q8WZA1-1"/>
    <property type="nucleotide sequence ID" value="XM_047424511.1"/>
</dbReference>
<dbReference type="PDB" id="5GGF">
    <property type="method" value="X-ray"/>
    <property type="resolution" value="2.49 A"/>
    <property type="chains" value="A/B/C=92-660"/>
</dbReference>
<dbReference type="PDB" id="5GGG">
    <property type="method" value="X-ray"/>
    <property type="resolution" value="3.00 A"/>
    <property type="chains" value="A=92-660"/>
</dbReference>
<dbReference type="PDB" id="5GGI">
    <property type="method" value="X-ray"/>
    <property type="resolution" value="2.60 A"/>
    <property type="chains" value="A/B=92-660"/>
</dbReference>
<dbReference type="PDB" id="5GGJ">
    <property type="method" value="X-ray"/>
    <property type="resolution" value="1.42 A"/>
    <property type="chains" value="A/B=92-250"/>
</dbReference>
<dbReference type="PDB" id="5GGK">
    <property type="method" value="X-ray"/>
    <property type="resolution" value="1.30 A"/>
    <property type="chains" value="A/B=92-250"/>
</dbReference>
<dbReference type="PDB" id="5GGL">
    <property type="method" value="X-ray"/>
    <property type="resolution" value="1.27 A"/>
    <property type="chains" value="A/B=92-250"/>
</dbReference>
<dbReference type="PDB" id="5GGN">
    <property type="method" value="X-ray"/>
    <property type="resolution" value="1.21 A"/>
    <property type="chains" value="A/B=92-250"/>
</dbReference>
<dbReference type="PDB" id="5GGO">
    <property type="method" value="X-ray"/>
    <property type="resolution" value="1.50 A"/>
    <property type="chains" value="A/B=92-250"/>
</dbReference>
<dbReference type="PDB" id="5GGP">
    <property type="method" value="X-ray"/>
    <property type="resolution" value="1.60 A"/>
    <property type="chains" value="A/B=92-250"/>
</dbReference>
<dbReference type="PDB" id="5XFC">
    <property type="method" value="X-ray"/>
    <property type="resolution" value="1.40 A"/>
    <property type="chains" value="A/B=92-250"/>
</dbReference>
<dbReference type="PDBsum" id="5GGF"/>
<dbReference type="PDBsum" id="5GGG"/>
<dbReference type="PDBsum" id="5GGI"/>
<dbReference type="PDBsum" id="5GGJ"/>
<dbReference type="PDBsum" id="5GGK"/>
<dbReference type="PDBsum" id="5GGL"/>
<dbReference type="PDBsum" id="5GGN"/>
<dbReference type="PDBsum" id="5GGO"/>
<dbReference type="PDBsum" id="5GGP"/>
<dbReference type="PDBsum" id="5XFC"/>
<dbReference type="SMR" id="Q8WZA1"/>
<dbReference type="BioGRID" id="120763">
    <property type="interactions" value="118"/>
</dbReference>
<dbReference type="FunCoup" id="Q8WZA1">
    <property type="interactions" value="680"/>
</dbReference>
<dbReference type="IntAct" id="Q8WZA1">
    <property type="interactions" value="75"/>
</dbReference>
<dbReference type="MINT" id="Q8WZA1"/>
<dbReference type="STRING" id="9606.ENSP00000361060"/>
<dbReference type="ChEMBL" id="CHEMBL2321629"/>
<dbReference type="CAZy" id="GT13">
    <property type="family name" value="Glycosyltransferase Family 13"/>
</dbReference>
<dbReference type="GlyGen" id="Q8WZA1">
    <property type="glycosylation" value="1 site"/>
</dbReference>
<dbReference type="iPTMnet" id="Q8WZA1"/>
<dbReference type="PhosphoSitePlus" id="Q8WZA1"/>
<dbReference type="SwissPalm" id="Q8WZA1"/>
<dbReference type="BioMuta" id="POMGNT1"/>
<dbReference type="DMDM" id="311033411"/>
<dbReference type="jPOST" id="Q8WZA1"/>
<dbReference type="MassIVE" id="Q8WZA1"/>
<dbReference type="PaxDb" id="9606-ENSP00000361060"/>
<dbReference type="PeptideAtlas" id="Q8WZA1"/>
<dbReference type="ProteomicsDB" id="65277"/>
<dbReference type="ProteomicsDB" id="75242">
    <molecule id="Q8WZA1-1"/>
</dbReference>
<dbReference type="Pumba" id="Q8WZA1"/>
<dbReference type="Antibodypedia" id="32757">
    <property type="antibodies" value="105 antibodies from 24 providers"/>
</dbReference>
<dbReference type="DNASU" id="55624"/>
<dbReference type="Ensembl" id="ENST00000371984.8">
    <molecule id="Q8WZA1-1"/>
    <property type="protein sequence ID" value="ENSP00000361052.3"/>
    <property type="gene ID" value="ENSG00000085998.15"/>
</dbReference>
<dbReference type="Ensembl" id="ENST00000371992.1">
    <molecule id="Q8WZA1-2"/>
    <property type="protein sequence ID" value="ENSP00000361060.1"/>
    <property type="gene ID" value="ENSG00000085998.15"/>
</dbReference>
<dbReference type="Ensembl" id="ENST00000396420.8">
    <molecule id="Q8WZA1-1"/>
    <property type="protein sequence ID" value="ENSP00000379698.4"/>
    <property type="gene ID" value="ENSG00000085998.15"/>
</dbReference>
<dbReference type="Ensembl" id="ENST00000686737.1">
    <molecule id="Q8WZA1-1"/>
    <property type="protein sequence ID" value="ENSP00000508736.1"/>
    <property type="gene ID" value="ENSG00000085998.15"/>
</dbReference>
<dbReference type="Ensembl" id="ENST00000687683.1">
    <molecule id="Q8WZA1-1"/>
    <property type="protein sequence ID" value="ENSP00000508522.1"/>
    <property type="gene ID" value="ENSG00000085998.15"/>
</dbReference>
<dbReference type="Ensembl" id="ENST00000690678.1">
    <molecule id="Q8WZA1-1"/>
    <property type="protein sequence ID" value="ENSP00000508703.1"/>
    <property type="gene ID" value="ENSG00000085998.15"/>
</dbReference>
<dbReference type="GeneID" id="55624"/>
<dbReference type="KEGG" id="hsa:55624"/>
<dbReference type="MANE-Select" id="ENST00000371984.8">
    <property type="protein sequence ID" value="ENSP00000361052.3"/>
    <property type="RefSeq nucleotide sequence ID" value="NM_017739.4"/>
    <property type="RefSeq protein sequence ID" value="NP_060209.4"/>
</dbReference>
<dbReference type="UCSC" id="uc001cpe.4">
    <molecule id="Q8WZA1-1"/>
    <property type="organism name" value="human"/>
</dbReference>
<dbReference type="AGR" id="HGNC:19139"/>
<dbReference type="CTD" id="55624"/>
<dbReference type="DisGeNET" id="55624"/>
<dbReference type="GeneCards" id="POMGNT1"/>
<dbReference type="HGNC" id="HGNC:19139">
    <property type="gene designation" value="POMGNT1"/>
</dbReference>
<dbReference type="HPA" id="ENSG00000085998">
    <property type="expression patterns" value="Low tissue specificity"/>
</dbReference>
<dbReference type="MalaCards" id="POMGNT1"/>
<dbReference type="MIM" id="253280">
    <property type="type" value="phenotype"/>
</dbReference>
<dbReference type="MIM" id="606822">
    <property type="type" value="gene"/>
</dbReference>
<dbReference type="MIM" id="613151">
    <property type="type" value="phenotype"/>
</dbReference>
<dbReference type="MIM" id="613157">
    <property type="type" value="phenotype"/>
</dbReference>
<dbReference type="MIM" id="617123">
    <property type="type" value="phenotype"/>
</dbReference>
<dbReference type="neXtProt" id="NX_Q8WZA1"/>
<dbReference type="OpenTargets" id="ENSG00000085998"/>
<dbReference type="Orphanet" id="370959">
    <property type="disease" value="Congenital muscular dystrophy with cerebellar involvement"/>
</dbReference>
<dbReference type="Orphanet" id="588">
    <property type="disease" value="Muscle-eye-brain disease"/>
</dbReference>
<dbReference type="Orphanet" id="206564">
    <property type="disease" value="POMGNT1-related limb-girdle muscular dystrophy R15"/>
</dbReference>
<dbReference type="Orphanet" id="791">
    <property type="disease" value="Retinitis pigmentosa"/>
</dbReference>
<dbReference type="Orphanet" id="899">
    <property type="disease" value="Walker-Warburg syndrome"/>
</dbReference>
<dbReference type="PharmGKB" id="PA142671161"/>
<dbReference type="VEuPathDB" id="HostDB:ENSG00000085998"/>
<dbReference type="eggNOG" id="ENOG502QSG3">
    <property type="taxonomic scope" value="Eukaryota"/>
</dbReference>
<dbReference type="GeneTree" id="ENSGT00530000063632"/>
<dbReference type="HOGENOM" id="CLU_024847_0_0_1"/>
<dbReference type="InParanoid" id="Q8WZA1"/>
<dbReference type="OMA" id="NYETEIH"/>
<dbReference type="OrthoDB" id="440755at2759"/>
<dbReference type="PAN-GO" id="Q8WZA1">
    <property type="GO annotations" value="3 GO annotations based on evolutionary models"/>
</dbReference>
<dbReference type="PhylomeDB" id="Q8WZA1"/>
<dbReference type="TreeFam" id="TF320555"/>
<dbReference type="BioCyc" id="MetaCyc:ENSG00000085998-MONOMER"/>
<dbReference type="BRENDA" id="2.4.1.312">
    <property type="organism ID" value="2681"/>
</dbReference>
<dbReference type="PathwayCommons" id="Q8WZA1"/>
<dbReference type="Reactome" id="R-HSA-5083628">
    <property type="pathway name" value="Defective POMGNT1 causes MDDGA3, MDDGB3 and MDDGC3"/>
</dbReference>
<dbReference type="Reactome" id="R-HSA-5173105">
    <property type="pathway name" value="O-linked glycosylation"/>
</dbReference>
<dbReference type="SignaLink" id="Q8WZA1"/>
<dbReference type="SIGNOR" id="Q8WZA1"/>
<dbReference type="UniPathway" id="UPA00378"/>
<dbReference type="BioGRID-ORCS" id="55624">
    <property type="hits" value="10 hits in 1153 CRISPR screens"/>
</dbReference>
<dbReference type="ChiTaRS" id="POMGNT1">
    <property type="organism name" value="human"/>
</dbReference>
<dbReference type="GeneWiki" id="POMGNT1"/>
<dbReference type="GenomeRNAi" id="55624"/>
<dbReference type="Pharos" id="Q8WZA1">
    <property type="development level" value="Tbio"/>
</dbReference>
<dbReference type="PRO" id="PR:Q8WZA1"/>
<dbReference type="Proteomes" id="UP000005640">
    <property type="component" value="Chromosome 1"/>
</dbReference>
<dbReference type="RNAct" id="Q8WZA1">
    <property type="molecule type" value="protein"/>
</dbReference>
<dbReference type="Bgee" id="ENSG00000085998">
    <property type="expression patterns" value="Expressed in apex of heart and 187 other cell types or tissues"/>
</dbReference>
<dbReference type="ExpressionAtlas" id="Q8WZA1">
    <property type="expression patterns" value="baseline and differential"/>
</dbReference>
<dbReference type="GO" id="GO:0000139">
    <property type="term" value="C:Golgi membrane"/>
    <property type="evidence" value="ECO:0000314"/>
    <property type="project" value="UniProtKB"/>
</dbReference>
<dbReference type="GO" id="GO:0016020">
    <property type="term" value="C:membrane"/>
    <property type="evidence" value="ECO:0000315"/>
    <property type="project" value="UniProtKB"/>
</dbReference>
<dbReference type="GO" id="GO:0008375">
    <property type="term" value="F:acetylglucosaminyltransferase activity"/>
    <property type="evidence" value="ECO:0000314"/>
    <property type="project" value="UniProtKB"/>
</dbReference>
<dbReference type="GO" id="GO:0047223">
    <property type="term" value="F:beta-1,3-galactosyl-O-glycosyl-glycoprotein beta-1,3-N-acetylglucosaminyltransferase activity"/>
    <property type="evidence" value="ECO:0000314"/>
    <property type="project" value="MGI"/>
</dbReference>
<dbReference type="GO" id="GO:0030246">
    <property type="term" value="F:carbohydrate binding"/>
    <property type="evidence" value="ECO:0007669"/>
    <property type="project" value="UniProtKB-KW"/>
</dbReference>
<dbReference type="GO" id="GO:0030145">
    <property type="term" value="F:manganese ion binding"/>
    <property type="evidence" value="ECO:0000314"/>
    <property type="project" value="UniProtKB"/>
</dbReference>
<dbReference type="GO" id="GO:0071711">
    <property type="term" value="P:basement membrane organization"/>
    <property type="evidence" value="ECO:0007669"/>
    <property type="project" value="Ensembl"/>
</dbReference>
<dbReference type="GO" id="GO:0021542">
    <property type="term" value="P:dentate gyrus development"/>
    <property type="evidence" value="ECO:0007669"/>
    <property type="project" value="Ensembl"/>
</dbReference>
<dbReference type="GO" id="GO:0010467">
    <property type="term" value="P:gene expression"/>
    <property type="evidence" value="ECO:0007669"/>
    <property type="project" value="Ensembl"/>
</dbReference>
<dbReference type="GO" id="GO:0051674">
    <property type="term" value="P:localization of cell"/>
    <property type="evidence" value="ECO:0007669"/>
    <property type="project" value="Ensembl"/>
</dbReference>
<dbReference type="GO" id="GO:0042552">
    <property type="term" value="P:myelination"/>
    <property type="evidence" value="ECO:0007669"/>
    <property type="project" value="Ensembl"/>
</dbReference>
<dbReference type="GO" id="GO:0016266">
    <property type="term" value="P:O-glycan processing"/>
    <property type="evidence" value="ECO:0000314"/>
    <property type="project" value="UniProtKB"/>
</dbReference>
<dbReference type="GO" id="GO:0006493">
    <property type="term" value="P:protein O-linked glycosylation"/>
    <property type="evidence" value="ECO:0000314"/>
    <property type="project" value="MGI"/>
</dbReference>
<dbReference type="GO" id="GO:0035269">
    <property type="term" value="P:protein O-linked mannosylation"/>
    <property type="evidence" value="ECO:0007669"/>
    <property type="project" value="Ensembl"/>
</dbReference>
<dbReference type="GO" id="GO:0150103">
    <property type="term" value="P:reactive gliosis"/>
    <property type="evidence" value="ECO:0007669"/>
    <property type="project" value="Ensembl"/>
</dbReference>
<dbReference type="GO" id="GO:0007605">
    <property type="term" value="P:sensory perception of sound"/>
    <property type="evidence" value="ECO:0007669"/>
    <property type="project" value="Ensembl"/>
</dbReference>
<dbReference type="CDD" id="cd02514">
    <property type="entry name" value="GT13_GLCNAC-TI"/>
    <property type="match status" value="1"/>
</dbReference>
<dbReference type="CDD" id="cd13937">
    <property type="entry name" value="PANDER_GnT-1_2_like"/>
    <property type="match status" value="1"/>
</dbReference>
<dbReference type="FunFam" id="3.90.550.10:FF:000038">
    <property type="entry name" value="protein O-linked-mannose beta-1,2-N-acetylglucosaminyltransferase 1 isoform X1"/>
    <property type="match status" value="1"/>
</dbReference>
<dbReference type="Gene3D" id="3.90.550.10">
    <property type="entry name" value="Spore Coat Polysaccharide Biosynthesis Protein SpsA, Chain A"/>
    <property type="match status" value="1"/>
</dbReference>
<dbReference type="InterPro" id="IPR004139">
    <property type="entry name" value="Glyco_trans_13"/>
</dbReference>
<dbReference type="InterPro" id="IPR039477">
    <property type="entry name" value="ILEI/PANDER_dom"/>
</dbReference>
<dbReference type="InterPro" id="IPR029044">
    <property type="entry name" value="Nucleotide-diphossugar_trans"/>
</dbReference>
<dbReference type="InterPro" id="IPR052463">
    <property type="entry name" value="O-linked_mannose_GnT"/>
</dbReference>
<dbReference type="InterPro" id="IPR039474">
    <property type="entry name" value="POMGNT1_PANDER-like"/>
</dbReference>
<dbReference type="PANTHER" id="PTHR46396">
    <property type="entry name" value="PROTEIN O-LINKED-MANNOSE BETA-1,2-N-ACETYLGLUCOSAMINYLTRANSFERASE 1"/>
    <property type="match status" value="1"/>
</dbReference>
<dbReference type="PANTHER" id="PTHR46396:SF1">
    <property type="entry name" value="PROTEIN O-LINKED-MANNOSE BETA-1,2-N-ACETYLGLUCOSAMINYLTRANSFERASE 1"/>
    <property type="match status" value="1"/>
</dbReference>
<dbReference type="Pfam" id="PF03071">
    <property type="entry name" value="GNT-I"/>
    <property type="match status" value="1"/>
</dbReference>
<dbReference type="Pfam" id="PF15711">
    <property type="entry name" value="ILEI"/>
    <property type="match status" value="1"/>
</dbReference>
<dbReference type="SUPFAM" id="SSF53448">
    <property type="entry name" value="Nucleotide-diphospho-sugar transferases"/>
    <property type="match status" value="1"/>
</dbReference>
<dbReference type="PROSITE" id="PS52031">
    <property type="entry name" value="GG_LECTIN"/>
    <property type="match status" value="1"/>
</dbReference>